<protein>
    <recommendedName>
        <fullName>Supporter of activation of yellow protein</fullName>
    </recommendedName>
    <alternativeName>
        <fullName>Protein enhancer of yellow 3</fullName>
    </alternativeName>
</protein>
<feature type="chain" id="PRO_0000059340" description="Supporter of activation of yellow protein">
    <location>
        <begin position="1"/>
        <end position="2006"/>
    </location>
</feature>
<feature type="zinc finger region" description="PHD-type 1; degenerate" evidence="1">
    <location>
        <begin position="1694"/>
        <end position="1751"/>
    </location>
</feature>
<feature type="zinc finger region" description="PHD-type 2; degenerate" evidence="1">
    <location>
        <begin position="1753"/>
        <end position="1796"/>
    </location>
</feature>
<feature type="region of interest" description="Disordered" evidence="2">
    <location>
        <begin position="1"/>
        <end position="208"/>
    </location>
</feature>
<feature type="region of interest" description="Disordered" evidence="2">
    <location>
        <begin position="313"/>
        <end position="347"/>
    </location>
</feature>
<feature type="region of interest" description="Disordered" evidence="2">
    <location>
        <begin position="458"/>
        <end position="564"/>
    </location>
</feature>
<feature type="region of interest" description="Disordered" evidence="2">
    <location>
        <begin position="744"/>
        <end position="794"/>
    </location>
</feature>
<feature type="region of interest" description="Disordered" evidence="2">
    <location>
        <begin position="821"/>
        <end position="916"/>
    </location>
</feature>
<feature type="region of interest" description="Disordered" evidence="2">
    <location>
        <begin position="929"/>
        <end position="1029"/>
    </location>
</feature>
<feature type="region of interest" description="Disordered" evidence="2">
    <location>
        <begin position="1044"/>
        <end position="1082"/>
    </location>
</feature>
<feature type="region of interest" description="Disordered" evidence="2">
    <location>
        <begin position="1099"/>
        <end position="1196"/>
    </location>
</feature>
<feature type="region of interest" description="SAY">
    <location>
        <begin position="1340"/>
        <end position="1573"/>
    </location>
</feature>
<feature type="region of interest" description="Disordered" evidence="2">
    <location>
        <begin position="1579"/>
        <end position="1685"/>
    </location>
</feature>
<feature type="region of interest" description="Disordered" evidence="2">
    <location>
        <begin position="1887"/>
        <end position="1911"/>
    </location>
</feature>
<feature type="compositionally biased region" description="Low complexity" evidence="2">
    <location>
        <begin position="10"/>
        <end position="60"/>
    </location>
</feature>
<feature type="compositionally biased region" description="Polar residues" evidence="2">
    <location>
        <begin position="67"/>
        <end position="81"/>
    </location>
</feature>
<feature type="compositionally biased region" description="Pro residues" evidence="2">
    <location>
        <begin position="118"/>
        <end position="128"/>
    </location>
</feature>
<feature type="compositionally biased region" description="Low complexity" evidence="2">
    <location>
        <begin position="129"/>
        <end position="168"/>
    </location>
</feature>
<feature type="compositionally biased region" description="Polar residues" evidence="2">
    <location>
        <begin position="189"/>
        <end position="199"/>
    </location>
</feature>
<feature type="compositionally biased region" description="Low complexity" evidence="2">
    <location>
        <begin position="321"/>
        <end position="347"/>
    </location>
</feature>
<feature type="compositionally biased region" description="Polar residues" evidence="2">
    <location>
        <begin position="485"/>
        <end position="494"/>
    </location>
</feature>
<feature type="compositionally biased region" description="Basic and acidic residues" evidence="2">
    <location>
        <begin position="525"/>
        <end position="534"/>
    </location>
</feature>
<feature type="compositionally biased region" description="Low complexity" evidence="2">
    <location>
        <begin position="543"/>
        <end position="563"/>
    </location>
</feature>
<feature type="compositionally biased region" description="Basic and acidic residues" evidence="2">
    <location>
        <begin position="744"/>
        <end position="758"/>
    </location>
</feature>
<feature type="compositionally biased region" description="Polar residues" evidence="2">
    <location>
        <begin position="759"/>
        <end position="769"/>
    </location>
</feature>
<feature type="compositionally biased region" description="Polar residues" evidence="2">
    <location>
        <begin position="828"/>
        <end position="844"/>
    </location>
</feature>
<feature type="compositionally biased region" description="Pro residues" evidence="2">
    <location>
        <begin position="861"/>
        <end position="870"/>
    </location>
</feature>
<feature type="compositionally biased region" description="Basic and acidic residues" evidence="2">
    <location>
        <begin position="936"/>
        <end position="945"/>
    </location>
</feature>
<feature type="compositionally biased region" description="Basic and acidic residues" evidence="2">
    <location>
        <begin position="963"/>
        <end position="972"/>
    </location>
</feature>
<feature type="compositionally biased region" description="Low complexity" evidence="2">
    <location>
        <begin position="978"/>
        <end position="990"/>
    </location>
</feature>
<feature type="compositionally biased region" description="Low complexity" evidence="2">
    <location>
        <begin position="1018"/>
        <end position="1029"/>
    </location>
</feature>
<feature type="compositionally biased region" description="Polar residues" evidence="2">
    <location>
        <begin position="1053"/>
        <end position="1080"/>
    </location>
</feature>
<feature type="compositionally biased region" description="Low complexity" evidence="2">
    <location>
        <begin position="1103"/>
        <end position="1112"/>
    </location>
</feature>
<feature type="compositionally biased region" description="Basic residues" evidence="2">
    <location>
        <begin position="1147"/>
        <end position="1158"/>
    </location>
</feature>
<feature type="compositionally biased region" description="Low complexity" evidence="2">
    <location>
        <begin position="1161"/>
        <end position="1173"/>
    </location>
</feature>
<feature type="compositionally biased region" description="Low complexity" evidence="2">
    <location>
        <begin position="1627"/>
        <end position="1652"/>
    </location>
</feature>
<feature type="compositionally biased region" description="Low complexity" evidence="2">
    <location>
        <begin position="1660"/>
        <end position="1677"/>
    </location>
</feature>
<gene>
    <name type="primary">e(y)3</name>
    <name type="synonym">l(1)G0084</name>
    <name type="synonym">SAYP</name>
    <name type="ORF">CG12238</name>
</gene>
<name>SAYP_DROME</name>
<evidence type="ECO:0000255" key="1">
    <source>
        <dbReference type="PROSITE-ProRule" id="PRU00146"/>
    </source>
</evidence>
<evidence type="ECO:0000256" key="2">
    <source>
        <dbReference type="SAM" id="MobiDB-lite"/>
    </source>
</evidence>
<evidence type="ECO:0000269" key="3">
    <source>
    </source>
</evidence>
<evidence type="ECO:0000305" key="4"/>
<accession>Q9VWF2</accession>
<accession>C7LAD9</accession>
<accession>Q7JW70</accession>
<organism>
    <name type="scientific">Drosophila melanogaster</name>
    <name type="common">Fruit fly</name>
    <dbReference type="NCBI Taxonomy" id="7227"/>
    <lineage>
        <taxon>Eukaryota</taxon>
        <taxon>Metazoa</taxon>
        <taxon>Ecdysozoa</taxon>
        <taxon>Arthropoda</taxon>
        <taxon>Hexapoda</taxon>
        <taxon>Insecta</taxon>
        <taxon>Pterygota</taxon>
        <taxon>Neoptera</taxon>
        <taxon>Endopterygota</taxon>
        <taxon>Diptera</taxon>
        <taxon>Brachycera</taxon>
        <taxon>Muscomorpha</taxon>
        <taxon>Ephydroidea</taxon>
        <taxon>Drosophilidae</taxon>
        <taxon>Drosophila</taxon>
        <taxon>Sophophora</taxon>
    </lineage>
</organism>
<reference key="1">
    <citation type="journal article" date="2000" name="Science">
        <title>The genome sequence of Drosophila melanogaster.</title>
        <authorList>
            <person name="Adams M.D."/>
            <person name="Celniker S.E."/>
            <person name="Holt R.A."/>
            <person name="Evans C.A."/>
            <person name="Gocayne J.D."/>
            <person name="Amanatides P.G."/>
            <person name="Scherer S.E."/>
            <person name="Li P.W."/>
            <person name="Hoskins R.A."/>
            <person name="Galle R.F."/>
            <person name="George R.A."/>
            <person name="Lewis S.E."/>
            <person name="Richards S."/>
            <person name="Ashburner M."/>
            <person name="Henderson S.N."/>
            <person name="Sutton G.G."/>
            <person name="Wortman J.R."/>
            <person name="Yandell M.D."/>
            <person name="Zhang Q."/>
            <person name="Chen L.X."/>
            <person name="Brandon R.C."/>
            <person name="Rogers Y.-H.C."/>
            <person name="Blazej R.G."/>
            <person name="Champe M."/>
            <person name="Pfeiffer B.D."/>
            <person name="Wan K.H."/>
            <person name="Doyle C."/>
            <person name="Baxter E.G."/>
            <person name="Helt G."/>
            <person name="Nelson C.R."/>
            <person name="Miklos G.L.G."/>
            <person name="Abril J.F."/>
            <person name="Agbayani A."/>
            <person name="An H.-J."/>
            <person name="Andrews-Pfannkoch C."/>
            <person name="Baldwin D."/>
            <person name="Ballew R.M."/>
            <person name="Basu A."/>
            <person name="Baxendale J."/>
            <person name="Bayraktaroglu L."/>
            <person name="Beasley E.M."/>
            <person name="Beeson K.Y."/>
            <person name="Benos P.V."/>
            <person name="Berman B.P."/>
            <person name="Bhandari D."/>
            <person name="Bolshakov S."/>
            <person name="Borkova D."/>
            <person name="Botchan M.R."/>
            <person name="Bouck J."/>
            <person name="Brokstein P."/>
            <person name="Brottier P."/>
            <person name="Burtis K.C."/>
            <person name="Busam D.A."/>
            <person name="Butler H."/>
            <person name="Cadieu E."/>
            <person name="Center A."/>
            <person name="Chandra I."/>
            <person name="Cherry J.M."/>
            <person name="Cawley S."/>
            <person name="Dahlke C."/>
            <person name="Davenport L.B."/>
            <person name="Davies P."/>
            <person name="de Pablos B."/>
            <person name="Delcher A."/>
            <person name="Deng Z."/>
            <person name="Mays A.D."/>
            <person name="Dew I."/>
            <person name="Dietz S.M."/>
            <person name="Dodson K."/>
            <person name="Doup L.E."/>
            <person name="Downes M."/>
            <person name="Dugan-Rocha S."/>
            <person name="Dunkov B.C."/>
            <person name="Dunn P."/>
            <person name="Durbin K.J."/>
            <person name="Evangelista C.C."/>
            <person name="Ferraz C."/>
            <person name="Ferriera S."/>
            <person name="Fleischmann W."/>
            <person name="Fosler C."/>
            <person name="Gabrielian A.E."/>
            <person name="Garg N.S."/>
            <person name="Gelbart W.M."/>
            <person name="Glasser K."/>
            <person name="Glodek A."/>
            <person name="Gong F."/>
            <person name="Gorrell J.H."/>
            <person name="Gu Z."/>
            <person name="Guan P."/>
            <person name="Harris M."/>
            <person name="Harris N.L."/>
            <person name="Harvey D.A."/>
            <person name="Heiman T.J."/>
            <person name="Hernandez J.R."/>
            <person name="Houck J."/>
            <person name="Hostin D."/>
            <person name="Houston K.A."/>
            <person name="Howland T.J."/>
            <person name="Wei M.-H."/>
            <person name="Ibegwam C."/>
            <person name="Jalali M."/>
            <person name="Kalush F."/>
            <person name="Karpen G.H."/>
            <person name="Ke Z."/>
            <person name="Kennison J.A."/>
            <person name="Ketchum K.A."/>
            <person name="Kimmel B.E."/>
            <person name="Kodira C.D."/>
            <person name="Kraft C.L."/>
            <person name="Kravitz S."/>
            <person name="Kulp D."/>
            <person name="Lai Z."/>
            <person name="Lasko P."/>
            <person name="Lei Y."/>
            <person name="Levitsky A.A."/>
            <person name="Li J.H."/>
            <person name="Li Z."/>
            <person name="Liang Y."/>
            <person name="Lin X."/>
            <person name="Liu X."/>
            <person name="Mattei B."/>
            <person name="McIntosh T.C."/>
            <person name="McLeod M.P."/>
            <person name="McPherson D."/>
            <person name="Merkulov G."/>
            <person name="Milshina N.V."/>
            <person name="Mobarry C."/>
            <person name="Morris J."/>
            <person name="Moshrefi A."/>
            <person name="Mount S.M."/>
            <person name="Moy M."/>
            <person name="Murphy B."/>
            <person name="Murphy L."/>
            <person name="Muzny D.M."/>
            <person name="Nelson D.L."/>
            <person name="Nelson D.R."/>
            <person name="Nelson K.A."/>
            <person name="Nixon K."/>
            <person name="Nusskern D.R."/>
            <person name="Pacleb J.M."/>
            <person name="Palazzolo M."/>
            <person name="Pittman G.S."/>
            <person name="Pan S."/>
            <person name="Pollard J."/>
            <person name="Puri V."/>
            <person name="Reese M.G."/>
            <person name="Reinert K."/>
            <person name="Remington K."/>
            <person name="Saunders R.D.C."/>
            <person name="Scheeler F."/>
            <person name="Shen H."/>
            <person name="Shue B.C."/>
            <person name="Siden-Kiamos I."/>
            <person name="Simpson M."/>
            <person name="Skupski M.P."/>
            <person name="Smith T.J."/>
            <person name="Spier E."/>
            <person name="Spradling A.C."/>
            <person name="Stapleton M."/>
            <person name="Strong R."/>
            <person name="Sun E."/>
            <person name="Svirskas R."/>
            <person name="Tector C."/>
            <person name="Turner R."/>
            <person name="Venter E."/>
            <person name="Wang A.H."/>
            <person name="Wang X."/>
            <person name="Wang Z.-Y."/>
            <person name="Wassarman D.A."/>
            <person name="Weinstock G.M."/>
            <person name="Weissenbach J."/>
            <person name="Williams S.M."/>
            <person name="Woodage T."/>
            <person name="Worley K.C."/>
            <person name="Wu D."/>
            <person name="Yang S."/>
            <person name="Yao Q.A."/>
            <person name="Ye J."/>
            <person name="Yeh R.-F."/>
            <person name="Zaveri J.S."/>
            <person name="Zhan M."/>
            <person name="Zhang G."/>
            <person name="Zhao Q."/>
            <person name="Zheng L."/>
            <person name="Zheng X.H."/>
            <person name="Zhong F.N."/>
            <person name="Zhong W."/>
            <person name="Zhou X."/>
            <person name="Zhu S.C."/>
            <person name="Zhu X."/>
            <person name="Smith H.O."/>
            <person name="Gibbs R.A."/>
            <person name="Myers E.W."/>
            <person name="Rubin G.M."/>
            <person name="Venter J.C."/>
        </authorList>
    </citation>
    <scope>NUCLEOTIDE SEQUENCE [LARGE SCALE GENOMIC DNA]</scope>
    <source>
        <strain>Berkeley</strain>
    </source>
</reference>
<reference key="2">
    <citation type="journal article" date="2002" name="Genome Biol.">
        <title>Annotation of the Drosophila melanogaster euchromatic genome: a systematic review.</title>
        <authorList>
            <person name="Misra S."/>
            <person name="Crosby M.A."/>
            <person name="Mungall C.J."/>
            <person name="Matthews B.B."/>
            <person name="Campbell K.S."/>
            <person name="Hradecky P."/>
            <person name="Huang Y."/>
            <person name="Kaminker J.S."/>
            <person name="Millburn G.H."/>
            <person name="Prochnik S.E."/>
            <person name="Smith C.D."/>
            <person name="Tupy J.L."/>
            <person name="Whitfield E.J."/>
            <person name="Bayraktaroglu L."/>
            <person name="Berman B.P."/>
            <person name="Bettencourt B.R."/>
            <person name="Celniker S.E."/>
            <person name="de Grey A.D.N.J."/>
            <person name="Drysdale R.A."/>
            <person name="Harris N.L."/>
            <person name="Richter J."/>
            <person name="Russo S."/>
            <person name="Schroeder A.J."/>
            <person name="Shu S.Q."/>
            <person name="Stapleton M."/>
            <person name="Yamada C."/>
            <person name="Ashburner M."/>
            <person name="Gelbart W.M."/>
            <person name="Rubin G.M."/>
            <person name="Lewis S.E."/>
        </authorList>
    </citation>
    <scope>GENOME REANNOTATION</scope>
    <source>
        <strain>Berkeley</strain>
    </source>
</reference>
<reference key="3">
    <citation type="submission" date="2009-09" db="EMBL/GenBank/DDBJ databases">
        <authorList>
            <person name="Carlson J.W."/>
            <person name="Booth B."/>
            <person name="Frise E."/>
            <person name="Park S."/>
            <person name="Wan K.H."/>
            <person name="Yu C."/>
            <person name="Celniker S.E."/>
        </authorList>
    </citation>
    <scope>NUCLEOTIDE SEQUENCE [LARGE SCALE MRNA]</scope>
    <source>
        <strain>Berkeley</strain>
        <tissue>Embryo</tissue>
    </source>
</reference>
<reference key="4">
    <citation type="journal article" date="2002" name="Genome Biol.">
        <title>A Drosophila full-length cDNA resource.</title>
        <authorList>
            <person name="Stapleton M."/>
            <person name="Carlson J.W."/>
            <person name="Brokstein P."/>
            <person name="Yu C."/>
            <person name="Champe M."/>
            <person name="George R.A."/>
            <person name="Guarin H."/>
            <person name="Kronmiller B."/>
            <person name="Pacleb J.M."/>
            <person name="Park S."/>
            <person name="Wan K.H."/>
            <person name="Rubin G.M."/>
            <person name="Celniker S.E."/>
        </authorList>
    </citation>
    <scope>NUCLEOTIDE SEQUENCE [LARGE SCALE MRNA] OF 25-2006</scope>
    <source>
        <strain>Berkeley</strain>
        <tissue>Embryo</tissue>
    </source>
</reference>
<reference key="5">
    <citation type="journal article" date="2005" name="EMBO J.">
        <title>A novel multidomain transcription coactivator SAYP can also repress transcription in heterochromatin.</title>
        <authorList>
            <person name="Shidlovskii Y.V."/>
            <person name="Krasnov A.N."/>
            <person name="Nikolenko J.V."/>
            <person name="Lebedeva L.A."/>
            <person name="Kopantseva M."/>
            <person name="Ermolaeva M.A."/>
            <person name="Ilyin Y.V."/>
            <person name="Nabirochkina E.N."/>
            <person name="Georgiev P.G."/>
            <person name="Georgieva S.G."/>
        </authorList>
    </citation>
    <scope>FUNCTION</scope>
    <scope>SUBCELLULAR LOCATION</scope>
    <scope>TISSUE SPECIFICITY</scope>
    <scope>DEVELOPMENTAL STAGE</scope>
    <scope>DOMAIN</scope>
</reference>
<comment type="function">
    <text evidence="3">Essential transcription regulator during early development. Coactivates transcription of some euchromatin genes and repress transcription in of euchromatin genes translocated to heterochromatin.</text>
</comment>
<comment type="interaction">
    <interactant intactId="EBI-131186">
        <id>Q9VWF2</id>
    </interactant>
    <interactant intactId="EBI-126851">
        <id>A1Z6M0</id>
        <label>Bap170</label>
    </interactant>
    <organismsDiffer>false</organismsDiffer>
    <experiments>5</experiments>
</comment>
<comment type="interaction">
    <interactant intactId="EBI-131186">
        <id>Q9VWF2</id>
    </interactant>
    <interactant intactId="EBI-15595394">
        <id>P49846</id>
        <label>Taf5</label>
    </interactant>
    <organismsDiffer>false</organismsDiffer>
    <experiments>5</experiments>
</comment>
<comment type="subcellular location">
    <subcellularLocation>
        <location evidence="3">Nucleus</location>
    </subcellularLocation>
    <subcellularLocation>
        <location evidence="3">Cytoplasm</location>
    </subcellularLocation>
    <subcellularLocation>
        <location evidence="3">Chromosome</location>
    </subcellularLocation>
    <text>On polytene chromosomes, it mainly localizes to transcriptionally active euchromatin sites but also localizes to heterochromatic regions such as the chromocenter and the chromosome 4. Cytoplasmic in nursing cells and growing oocytes.</text>
</comment>
<comment type="tissue specificity">
    <text evidence="3">Widely expressed. Highly expressed in ovary. Expressed in nursing cells and growing oocytes at all stages of development and accumulates in mature oocytes. Expressed in the nuclei of syncytium blastoderm of early embryos and in the nuclei of different tissues of late embryos, larvae, and adults.</text>
</comment>
<comment type="developmental stage">
    <text evidence="3">Expressed throughout all stages of development. Expressed at higher level in adult females.</text>
</comment>
<comment type="domain">
    <text evidence="3">The PHD fingers mediate the transcription repression in heterochromatin.</text>
</comment>
<comment type="domain">
    <text evidence="3">The SAY domain is essential for fly viability and transcription activation.</text>
</comment>
<comment type="similarity">
    <text evidence="4">Belongs to the SAYP family.</text>
</comment>
<comment type="sequence caution" evidence="4">
    <conflict type="erroneous initiation">
        <sequence resource="EMBL-CDS" id="AAM48352"/>
    </conflict>
    <text>Truncated N-terminus.</text>
</comment>
<keyword id="KW-0010">Activator</keyword>
<keyword id="KW-0158">Chromosome</keyword>
<keyword id="KW-0963">Cytoplasm</keyword>
<keyword id="KW-0479">Metal-binding</keyword>
<keyword id="KW-0539">Nucleus</keyword>
<keyword id="KW-1185">Reference proteome</keyword>
<keyword id="KW-0677">Repeat</keyword>
<keyword id="KW-0678">Repressor</keyword>
<keyword id="KW-0804">Transcription</keyword>
<keyword id="KW-0805">Transcription regulation</keyword>
<keyword id="KW-0862">Zinc</keyword>
<keyword id="KW-0863">Zinc-finger</keyword>
<sequence>MNDLRQQQMVAATSSSGSESGTAVESAAATSTAGSAGAAGRPQSNCSANSNAKSVAASSTSEEEQRVSSTSSPAQRDQQLNADRDREQEPEPQQQQQREEALQHQHNQPGHITSTTASPPPTLPPPTTPCDDAPSTTGASASASSASGEAPSAASAAGAAGGPMAATALEVESEERDGHKIILKLSKHANPNSNANESQPGGDERRVEPLRIQLPCGGAEGGLVAKQQDAFDADASSCSSSCAEDEVATTLGQQLRNTPHIVPKLTIRAANERRVGSVVPKLTIKLPENPAASGSNSNSGSCSAAVSGAQSAMPAKNDAHLSSLSPASASSSSASSSSSSSSSSSLAEMQTVPKLMIKTTLAGSSCISSSEELPQQQQQIPKLTIKTGGGGQEHVHTVIMTHDLNNAQSIPKLTIKTKSIEMIEDEQAAKLEQQLQPLPKLTIKNLCSPKHKVRAVLEEKPPTAASKLAIPKPTPNPTPAPMTNGGESNSSSQEFCGFSDPDADIAAPASDDVRRNSDDMVIDDSLSKEHDPKIFHNLPPMPASNGIASGGSKASKASKSAQSQHNVVDMVDLTSSPSPGSSPTHVPNNFTGRISPKGLLIDCLRMQTAIGCYVPEEADSRVRPAASPNSNILLSQLTAPAKSFTTTTPKSKSSKYPQLTERLMANGSGTGGGSVIAAESEAVVGPLPAANPAQSIIESIEILDTPDGSPRVAYMDEDSNPMLNKHLQTIHKLAMDHGVEQRMDTQDNNNENHLKRTNSEGNESPSSRLPPSKQRRLDNDENDQQTQNCHDPARKCSESLQALPPSHRSRKQKHERILNTDLEGSLFPPTQQQSISTPDQNGALSSEVEGEDAKAQDPLEPATPQPPPVATPAGTGKKRGRPKRIQNQSSPDGGGAVTPKPGTPQEEANSAVKSRRVQLLRKRLAIDMVSVGQEQADMKAKEKESSVGVPNARVEDGLAETLESPKTRDHRPLRATRRTTTSTNTNLQPTPKSTRKRQSKASVQQSQLPPPTMAQFGSSESESNNNNNSSISFALSAQIDLTMCSSSSSTSSGAAANQQVIGGSGSSSMLPPTTILSSSDPLPDVIFQPNDFSSIMATQQLRSSRPSSISCGSTGGSQPDCHDEDNYTSALDNSGDETALPMPPTRGRGRGRRSRGGRGRGSSSVDRAVSVGGTASTTPATQPRAPRMSRGASAVAKAIAMSRPRCVGGLKHQPDPERLKGLFSPSPQVFEEDTRMSADLSNSNQSMASLMEPPLTPQKQPDFLNNEESQSSMVSNVSMMDSNQGQSADAILGSALKRPKKKKMETCVAEDTDYSASSIAEYDWPPPKGCCPSKNRDTFMIQEQVALYLGITSFKRKYPDLPRRSVDMEERNWLQEKGLVSEKLCDLGITAVWASDILDIMYADFFDKYEEYKEYIRRKHLREIEAKQKALGLTVGAGRGLQARDRAMLSATKWNAYFNKSRKDERQSCMDLQTFTINQPQPRTAPTCTRLERSTSDLIRAVAEEANIPAPPNLLPPRDYDEAFRNSDYAYPLTVVPDQFSMAYRQFEPAELRAYPLDTALDKPPTDLMAQLLQAKSEAVGSDEIKTSAPAPKDLGQEQSAIKSVTVTAPVRRSRRSTRQQTDKVRTASSSSTSSAQSVSSASSGNGSSSDTESGDESDFSSTSSCSSSTGASSGAGSEDEDGNECSSSVRLSTCGVCLRSQHRNARDMPEAFIRCYTCRKRVHPSCVDMPPRMVGRVRNYNWQCAGCKCCIKCRSSQRPGKMLYCEQCDRGYHIYCLGLRTVPDGRWSCERCCFCMRCGATKPEGLPQVAALSQASGGPSANGDRSKAARNKRLKWVHEYRIDHVTKIREHAAMFCVPCARNKPAKRQSAAGAAGAAAVTPVLEATSAQTDDSPMPSPGLTTNGGRALSPTAALSPKAAVPVASLPPVLEATTVTTNIAGTIGRRQAGNAVNITTMQCSSSSSSNFSGNGVTEDAANVTATGTATAAAGAPAATPIGIAPPPVVA</sequence>
<dbReference type="EMBL" id="AE014298">
    <property type="protein sequence ID" value="AAF48990.3"/>
    <property type="molecule type" value="Genomic_DNA"/>
</dbReference>
<dbReference type="EMBL" id="BT099689">
    <property type="protein sequence ID" value="ACV44475.1"/>
    <property type="molecule type" value="mRNA"/>
</dbReference>
<dbReference type="EMBL" id="AY118323">
    <property type="protein sequence ID" value="AAM48352.1"/>
    <property type="status" value="ALT_INIT"/>
    <property type="molecule type" value="mRNA"/>
</dbReference>
<dbReference type="RefSeq" id="NP_001259718.1">
    <property type="nucleotide sequence ID" value="NM_001272789.1"/>
</dbReference>
<dbReference type="RefSeq" id="NP_001259721.1">
    <property type="nucleotide sequence ID" value="NM_001272792.1"/>
</dbReference>
<dbReference type="RefSeq" id="NP_608334.3">
    <property type="nucleotide sequence ID" value="NM_134490.3"/>
</dbReference>
<dbReference type="SMR" id="Q9VWF2"/>
<dbReference type="BioGRID" id="59261">
    <property type="interactions" value="30"/>
</dbReference>
<dbReference type="ComplexPortal" id="CPX-2383">
    <property type="entry name" value="Polybromo-containing BRAHMA associated proteins complex"/>
</dbReference>
<dbReference type="DIP" id="DIP-48904N"/>
<dbReference type="FunCoup" id="Q9VWF2">
    <property type="interactions" value="271"/>
</dbReference>
<dbReference type="IntAct" id="Q9VWF2">
    <property type="interactions" value="26"/>
</dbReference>
<dbReference type="MINT" id="Q9VWF2"/>
<dbReference type="STRING" id="7227.FBpp0306394"/>
<dbReference type="GlyGen" id="Q9VWF2">
    <property type="glycosylation" value="5 sites"/>
</dbReference>
<dbReference type="PaxDb" id="7227-FBpp0074531"/>
<dbReference type="DNASU" id="32965"/>
<dbReference type="EnsemblMetazoa" id="FBtr0074762">
    <property type="protein sequence ID" value="FBpp0074531"/>
    <property type="gene ID" value="FBgn0087008"/>
</dbReference>
<dbReference type="EnsemblMetazoa" id="FBtr0334278">
    <property type="protein sequence ID" value="FBpp0306393"/>
    <property type="gene ID" value="FBgn0087008"/>
</dbReference>
<dbReference type="EnsemblMetazoa" id="FBtr0334281">
    <property type="protein sequence ID" value="FBpp0306396"/>
    <property type="gene ID" value="FBgn0087008"/>
</dbReference>
<dbReference type="GeneID" id="32965"/>
<dbReference type="KEGG" id="dme:Dmel_CG12238"/>
<dbReference type="AGR" id="FB:FBgn0087008"/>
<dbReference type="CTD" id="32965"/>
<dbReference type="FlyBase" id="FBgn0087008">
    <property type="gene designation" value="e(y)3"/>
</dbReference>
<dbReference type="VEuPathDB" id="VectorBase:FBgn0087008"/>
<dbReference type="eggNOG" id="KOG1512">
    <property type="taxonomic scope" value="Eukaryota"/>
</dbReference>
<dbReference type="GeneTree" id="ENSGT00940000155172"/>
<dbReference type="InParanoid" id="Q9VWF2"/>
<dbReference type="OrthoDB" id="1903104at2759"/>
<dbReference type="PhylomeDB" id="Q9VWF2"/>
<dbReference type="SignaLink" id="Q9VWF2"/>
<dbReference type="BioGRID-ORCS" id="32965">
    <property type="hits" value="0 hits in 1 CRISPR screen"/>
</dbReference>
<dbReference type="GenomeRNAi" id="32965"/>
<dbReference type="PRO" id="PR:Q9VWF2"/>
<dbReference type="Proteomes" id="UP000000803">
    <property type="component" value="Chromosome X"/>
</dbReference>
<dbReference type="Bgee" id="FBgn0087008">
    <property type="expression patterns" value="Expressed in interfollicle cell in ovary and 266 other cell types or tissues"/>
</dbReference>
<dbReference type="ExpressionAtlas" id="Q9VWF2">
    <property type="expression patterns" value="baseline and differential"/>
</dbReference>
<dbReference type="GO" id="GO:0035060">
    <property type="term" value="C:brahma complex"/>
    <property type="evidence" value="ECO:0000314"/>
    <property type="project" value="FlyBase"/>
</dbReference>
<dbReference type="GO" id="GO:0005737">
    <property type="term" value="C:cytoplasm"/>
    <property type="evidence" value="ECO:0000318"/>
    <property type="project" value="GO_Central"/>
</dbReference>
<dbReference type="GO" id="GO:0000791">
    <property type="term" value="C:euchromatin"/>
    <property type="evidence" value="ECO:0000314"/>
    <property type="project" value="UniProtKB"/>
</dbReference>
<dbReference type="GO" id="GO:0000792">
    <property type="term" value="C:heterochromatin"/>
    <property type="evidence" value="ECO:0000314"/>
    <property type="project" value="UniProtKB"/>
</dbReference>
<dbReference type="GO" id="GO:0005634">
    <property type="term" value="C:nucleus"/>
    <property type="evidence" value="ECO:0000314"/>
    <property type="project" value="UniProtKB"/>
</dbReference>
<dbReference type="GO" id="GO:0005700">
    <property type="term" value="C:polytene chromosome"/>
    <property type="evidence" value="ECO:0000314"/>
    <property type="project" value="UniProtKB"/>
</dbReference>
<dbReference type="GO" id="GO:0005701">
    <property type="term" value="C:polytene chromosome chromocenter"/>
    <property type="evidence" value="ECO:0000314"/>
    <property type="project" value="UniProtKB"/>
</dbReference>
<dbReference type="GO" id="GO:0003682">
    <property type="term" value="F:chromatin binding"/>
    <property type="evidence" value="ECO:0000314"/>
    <property type="project" value="UniProtKB"/>
</dbReference>
<dbReference type="GO" id="GO:0003713">
    <property type="term" value="F:transcription coactivator activity"/>
    <property type="evidence" value="ECO:0000315"/>
    <property type="project" value="UniProtKB"/>
</dbReference>
<dbReference type="GO" id="GO:0003714">
    <property type="term" value="F:transcription corepressor activity"/>
    <property type="evidence" value="ECO:0000315"/>
    <property type="project" value="UniProtKB"/>
</dbReference>
<dbReference type="GO" id="GO:0008270">
    <property type="term" value="F:zinc ion binding"/>
    <property type="evidence" value="ECO:0007669"/>
    <property type="project" value="UniProtKB-KW"/>
</dbReference>
<dbReference type="GO" id="GO:0006338">
    <property type="term" value="P:chromatin remodeling"/>
    <property type="evidence" value="ECO:0000316"/>
    <property type="project" value="FlyBase"/>
</dbReference>
<dbReference type="GO" id="GO:0045892">
    <property type="term" value="P:negative regulation of DNA-templated transcription"/>
    <property type="evidence" value="ECO:0000315"/>
    <property type="project" value="UniProtKB"/>
</dbReference>
<dbReference type="GO" id="GO:0045893">
    <property type="term" value="P:positive regulation of DNA-templated transcription"/>
    <property type="evidence" value="ECO:0000315"/>
    <property type="project" value="UniProtKB"/>
</dbReference>
<dbReference type="CDD" id="cd15529">
    <property type="entry name" value="PHD2_PHF10"/>
    <property type="match status" value="1"/>
</dbReference>
<dbReference type="CDD" id="cd21085">
    <property type="entry name" value="WH_NTD_PHF10"/>
    <property type="match status" value="1"/>
</dbReference>
<dbReference type="FunFam" id="3.30.40.10:FF:000717">
    <property type="entry name" value="Enhancer of yellow 3, isoform B"/>
    <property type="match status" value="1"/>
</dbReference>
<dbReference type="Gene3D" id="3.30.40.10">
    <property type="entry name" value="Zinc/RING finger domain, C3HC4 (zinc finger)"/>
    <property type="match status" value="1"/>
</dbReference>
<dbReference type="InterPro" id="IPR011011">
    <property type="entry name" value="Znf_FYVE_PHD"/>
</dbReference>
<dbReference type="InterPro" id="IPR001965">
    <property type="entry name" value="Znf_PHD"/>
</dbReference>
<dbReference type="InterPro" id="IPR019787">
    <property type="entry name" value="Znf_PHD-finger"/>
</dbReference>
<dbReference type="InterPro" id="IPR013083">
    <property type="entry name" value="Znf_RING/FYVE/PHD"/>
</dbReference>
<dbReference type="PANTHER" id="PTHR45888:SF5">
    <property type="entry name" value="D4, ISOFORM A"/>
    <property type="match status" value="1"/>
</dbReference>
<dbReference type="PANTHER" id="PTHR45888">
    <property type="entry name" value="HL01030P-RELATED"/>
    <property type="match status" value="1"/>
</dbReference>
<dbReference type="Pfam" id="PF00628">
    <property type="entry name" value="PHD"/>
    <property type="match status" value="1"/>
</dbReference>
<dbReference type="SMART" id="SM00249">
    <property type="entry name" value="PHD"/>
    <property type="match status" value="2"/>
</dbReference>
<dbReference type="SUPFAM" id="SSF57903">
    <property type="entry name" value="FYVE/PHD zinc finger"/>
    <property type="match status" value="1"/>
</dbReference>
<dbReference type="PROSITE" id="PS01359">
    <property type="entry name" value="ZF_PHD_1"/>
    <property type="match status" value="2"/>
</dbReference>
<dbReference type="PROSITE" id="PS50016">
    <property type="entry name" value="ZF_PHD_2"/>
    <property type="match status" value="2"/>
</dbReference>
<proteinExistence type="evidence at protein level"/>